<dbReference type="EC" id="5.4.2.10" evidence="1"/>
<dbReference type="EMBL" id="CP000099">
    <property type="protein sequence ID" value="AAZ70955.1"/>
    <property type="molecule type" value="Genomic_DNA"/>
</dbReference>
<dbReference type="SMR" id="Q46AY7"/>
<dbReference type="STRING" id="269797.Mbar_A2021"/>
<dbReference type="PaxDb" id="269797-Mbar_A2021"/>
<dbReference type="KEGG" id="mba:Mbar_A2021"/>
<dbReference type="eggNOG" id="arCOG00767">
    <property type="taxonomic scope" value="Archaea"/>
</dbReference>
<dbReference type="HOGENOM" id="CLU_016950_7_1_2"/>
<dbReference type="OrthoDB" id="10363at2157"/>
<dbReference type="GO" id="GO:0000287">
    <property type="term" value="F:magnesium ion binding"/>
    <property type="evidence" value="ECO:0007669"/>
    <property type="project" value="UniProtKB-UniRule"/>
</dbReference>
<dbReference type="GO" id="GO:0008966">
    <property type="term" value="F:phosphoglucosamine mutase activity"/>
    <property type="evidence" value="ECO:0007669"/>
    <property type="project" value="UniProtKB-UniRule"/>
</dbReference>
<dbReference type="GO" id="GO:0005975">
    <property type="term" value="P:carbohydrate metabolic process"/>
    <property type="evidence" value="ECO:0007669"/>
    <property type="project" value="InterPro"/>
</dbReference>
<dbReference type="CDD" id="cd03087">
    <property type="entry name" value="PGM_like1"/>
    <property type="match status" value="1"/>
</dbReference>
<dbReference type="FunFam" id="3.40.120.10:FF:000001">
    <property type="entry name" value="Phosphoglucosamine mutase"/>
    <property type="match status" value="1"/>
</dbReference>
<dbReference type="FunFam" id="3.40.120.10:FF:000003">
    <property type="entry name" value="Phosphoglucosamine mutase"/>
    <property type="match status" value="1"/>
</dbReference>
<dbReference type="FunFam" id="3.30.310.50:FF:000009">
    <property type="entry name" value="Probable phosphoglucosamine mutase"/>
    <property type="match status" value="1"/>
</dbReference>
<dbReference type="Gene3D" id="3.40.120.10">
    <property type="entry name" value="Alpha-D-Glucose-1,6-Bisphosphate, subunit A, domain 3"/>
    <property type="match status" value="3"/>
</dbReference>
<dbReference type="Gene3D" id="3.30.310.50">
    <property type="entry name" value="Alpha-D-phosphohexomutase, C-terminal domain"/>
    <property type="match status" value="1"/>
</dbReference>
<dbReference type="HAMAP" id="MF_01554_A">
    <property type="entry name" value="GlmM_A"/>
    <property type="match status" value="1"/>
</dbReference>
<dbReference type="InterPro" id="IPR005844">
    <property type="entry name" value="A-D-PHexomutase_a/b/a-I"/>
</dbReference>
<dbReference type="InterPro" id="IPR016055">
    <property type="entry name" value="A-D-PHexomutase_a/b/a-I/II/III"/>
</dbReference>
<dbReference type="InterPro" id="IPR005845">
    <property type="entry name" value="A-D-PHexomutase_a/b/a-II"/>
</dbReference>
<dbReference type="InterPro" id="IPR005846">
    <property type="entry name" value="A-D-PHexomutase_a/b/a-III"/>
</dbReference>
<dbReference type="InterPro" id="IPR005843">
    <property type="entry name" value="A-D-PHexomutase_C"/>
</dbReference>
<dbReference type="InterPro" id="IPR036900">
    <property type="entry name" value="A-D-PHexomutase_C_sf"/>
</dbReference>
<dbReference type="InterPro" id="IPR016066">
    <property type="entry name" value="A-D-PHexomutase_CS"/>
</dbReference>
<dbReference type="InterPro" id="IPR005841">
    <property type="entry name" value="Alpha-D-phosphohexomutase_SF"/>
</dbReference>
<dbReference type="InterPro" id="IPR023666">
    <property type="entry name" value="GlmM_arc"/>
</dbReference>
<dbReference type="InterPro" id="IPR024086">
    <property type="entry name" value="GlmM_arc-type"/>
</dbReference>
<dbReference type="NCBIfam" id="TIGR03990">
    <property type="entry name" value="Arch_GlmM"/>
    <property type="match status" value="1"/>
</dbReference>
<dbReference type="PANTHER" id="PTHR43771">
    <property type="entry name" value="PHOSPHOMANNOMUTASE"/>
    <property type="match status" value="1"/>
</dbReference>
<dbReference type="PANTHER" id="PTHR43771:SF1">
    <property type="entry name" value="PHOSPHOMANNOMUTASE"/>
    <property type="match status" value="1"/>
</dbReference>
<dbReference type="Pfam" id="PF02878">
    <property type="entry name" value="PGM_PMM_I"/>
    <property type="match status" value="1"/>
</dbReference>
<dbReference type="Pfam" id="PF02879">
    <property type="entry name" value="PGM_PMM_II"/>
    <property type="match status" value="1"/>
</dbReference>
<dbReference type="Pfam" id="PF02880">
    <property type="entry name" value="PGM_PMM_III"/>
    <property type="match status" value="1"/>
</dbReference>
<dbReference type="Pfam" id="PF00408">
    <property type="entry name" value="PGM_PMM_IV"/>
    <property type="match status" value="1"/>
</dbReference>
<dbReference type="PRINTS" id="PR00509">
    <property type="entry name" value="PGMPMM"/>
</dbReference>
<dbReference type="SUPFAM" id="SSF55957">
    <property type="entry name" value="Phosphoglucomutase, C-terminal domain"/>
    <property type="match status" value="1"/>
</dbReference>
<dbReference type="SUPFAM" id="SSF53738">
    <property type="entry name" value="Phosphoglucomutase, first 3 domains"/>
    <property type="match status" value="3"/>
</dbReference>
<dbReference type="PROSITE" id="PS00710">
    <property type="entry name" value="PGM_PMM"/>
    <property type="match status" value="1"/>
</dbReference>
<comment type="function">
    <text evidence="1">Catalyzes the conversion of glucosamine-6-phosphate to glucosamine-1-phosphate.</text>
</comment>
<comment type="catalytic activity">
    <reaction evidence="1">
        <text>alpha-D-glucosamine 1-phosphate = D-glucosamine 6-phosphate</text>
        <dbReference type="Rhea" id="RHEA:23424"/>
        <dbReference type="ChEBI" id="CHEBI:58516"/>
        <dbReference type="ChEBI" id="CHEBI:58725"/>
        <dbReference type="EC" id="5.4.2.10"/>
    </reaction>
</comment>
<comment type="cofactor">
    <cofactor evidence="1">
        <name>Mg(2+)</name>
        <dbReference type="ChEBI" id="CHEBI:18420"/>
    </cofactor>
    <text evidence="1">Binds 1 Mg(2+) ion per subunit.</text>
</comment>
<comment type="PTM">
    <text evidence="1">Activated by phosphorylation.</text>
</comment>
<comment type="similarity">
    <text evidence="1">Belongs to the phosphohexose mutase family.</text>
</comment>
<keyword id="KW-0413">Isomerase</keyword>
<keyword id="KW-0460">Magnesium</keyword>
<keyword id="KW-0479">Metal-binding</keyword>
<keyword id="KW-0597">Phosphoprotein</keyword>
<reference key="1">
    <citation type="journal article" date="2006" name="J. Bacteriol.">
        <title>The Methanosarcina barkeri genome: comparative analysis with Methanosarcina acetivorans and Methanosarcina mazei reveals extensive rearrangement within methanosarcinal genomes.</title>
        <authorList>
            <person name="Maeder D.L."/>
            <person name="Anderson I."/>
            <person name="Brettin T.S."/>
            <person name="Bruce D.C."/>
            <person name="Gilna P."/>
            <person name="Han C.S."/>
            <person name="Lapidus A."/>
            <person name="Metcalf W.W."/>
            <person name="Saunders E."/>
            <person name="Tapia R."/>
            <person name="Sowers K.R."/>
        </authorList>
    </citation>
    <scope>NUCLEOTIDE SEQUENCE [LARGE SCALE GENOMIC DNA]</scope>
    <source>
        <strain>Fusaro / DSM 804</strain>
    </source>
</reference>
<accession>Q46AY7</accession>
<gene>
    <name evidence="1" type="primary">glmM</name>
    <name type="ordered locus">Mbar_A2021</name>
</gene>
<name>GLMM_METBF</name>
<evidence type="ECO:0000255" key="1">
    <source>
        <dbReference type="HAMAP-Rule" id="MF_01554"/>
    </source>
</evidence>
<feature type="chain" id="PRO_0000337819" description="Probable phosphoglucosamine mutase">
    <location>
        <begin position="1"/>
        <end position="434"/>
    </location>
</feature>
<feature type="active site" description="Phosphoserine intermediate" evidence="1">
    <location>
        <position position="91"/>
    </location>
</feature>
<feature type="binding site" description="via phosphate group" evidence="1">
    <location>
        <position position="91"/>
    </location>
    <ligand>
        <name>Mg(2+)</name>
        <dbReference type="ChEBI" id="CHEBI:18420"/>
    </ligand>
</feature>
<feature type="binding site" evidence="1">
    <location>
        <position position="229"/>
    </location>
    <ligand>
        <name>Mg(2+)</name>
        <dbReference type="ChEBI" id="CHEBI:18420"/>
    </ligand>
</feature>
<feature type="binding site" evidence="1">
    <location>
        <position position="231"/>
    </location>
    <ligand>
        <name>Mg(2+)</name>
        <dbReference type="ChEBI" id="CHEBI:18420"/>
    </ligand>
</feature>
<feature type="binding site" evidence="1">
    <location>
        <position position="233"/>
    </location>
    <ligand>
        <name>Mg(2+)</name>
        <dbReference type="ChEBI" id="CHEBI:18420"/>
    </ligand>
</feature>
<feature type="modified residue" description="Phosphoserine" evidence="1">
    <location>
        <position position="91"/>
    </location>
</feature>
<protein>
    <recommendedName>
        <fullName evidence="1">Probable phosphoglucosamine mutase</fullName>
        <ecNumber evidence="1">5.4.2.10</ecNumber>
    </recommendedName>
</protein>
<proteinExistence type="inferred from homology"/>
<organism>
    <name type="scientific">Methanosarcina barkeri (strain Fusaro / DSM 804)</name>
    <dbReference type="NCBI Taxonomy" id="269797"/>
    <lineage>
        <taxon>Archaea</taxon>
        <taxon>Methanobacteriati</taxon>
        <taxon>Methanobacteriota</taxon>
        <taxon>Stenosarchaea group</taxon>
        <taxon>Methanomicrobia</taxon>
        <taxon>Methanosarcinales</taxon>
        <taxon>Methanosarcinaceae</taxon>
        <taxon>Methanosarcina</taxon>
    </lineage>
</organism>
<sequence length="434" mass="46732">MKLFGSSGIRGIANKEITPELALNVGLVLGSRKKTAVIGRDPRVSAPMIEHALIAGMTATGCAVTEIGLVSTPTLAYAAREYECGVMVTASHNPSEYVGIKLWNPDGMAFDSAQQEEIEKAIEDADFSLVPWNLIGKFEEDGNAIRAHMNMIKKLVGSSSLKVVLDCGCGAGGTITPYLLQELGCEVITLNAQPDGHFPARNPEPNDENLTMLKKAVVDFGADLGIAHDGDADRMMAVDEKGNFVSGDEMLAIFGLYECSGKKGTVVVPVDTSMMVGDSLQGSEIVRTRVGDVYVAEGIKQSGAIYGGEPSGSWIFPKISYCPDGIYAAAKLVEIVKEKKLSELREELPRYATKRGALPCANDKKAEFMEKVKAKLEPLGKVLDIDGIRVEMDNGWVLVRPSGTEAKVRITAEARENVDEIFDMAEKIAKEALK</sequence>